<gene>
    <name evidence="2" type="primary">secY</name>
    <name type="ordered locus">MTH_26</name>
</gene>
<keyword id="KW-1003">Cell membrane</keyword>
<keyword id="KW-0472">Membrane</keyword>
<keyword id="KW-0653">Protein transport</keyword>
<keyword id="KW-1185">Reference proteome</keyword>
<keyword id="KW-0811">Translocation</keyword>
<keyword id="KW-0812">Transmembrane</keyword>
<keyword id="KW-1133">Transmembrane helix</keyword>
<keyword id="KW-0813">Transport</keyword>
<reference key="1">
    <citation type="journal article" date="1997" name="J. Bacteriol.">
        <title>Complete genome sequence of Methanobacterium thermoautotrophicum deltaH: functional analysis and comparative genomics.</title>
        <authorList>
            <person name="Smith D.R."/>
            <person name="Doucette-Stamm L.A."/>
            <person name="Deloughery C."/>
            <person name="Lee H.-M."/>
            <person name="Dubois J."/>
            <person name="Aldredge T."/>
            <person name="Bashirzadeh R."/>
            <person name="Blakely D."/>
            <person name="Cook R."/>
            <person name="Gilbert K."/>
            <person name="Harrison D."/>
            <person name="Hoang L."/>
            <person name="Keagle P."/>
            <person name="Lumm W."/>
            <person name="Pothier B."/>
            <person name="Qiu D."/>
            <person name="Spadafora R."/>
            <person name="Vicare R."/>
            <person name="Wang Y."/>
            <person name="Wierzbowski J."/>
            <person name="Gibson R."/>
            <person name="Jiwani N."/>
            <person name="Caruso A."/>
            <person name="Bush D."/>
            <person name="Safer H."/>
            <person name="Patwell D."/>
            <person name="Prabhakar S."/>
            <person name="McDougall S."/>
            <person name="Shimer G."/>
            <person name="Goyal A."/>
            <person name="Pietrovski S."/>
            <person name="Church G.M."/>
            <person name="Daniels C.J."/>
            <person name="Mao J.-I."/>
            <person name="Rice P."/>
            <person name="Noelling J."/>
            <person name="Reeve J.N."/>
        </authorList>
    </citation>
    <scope>NUCLEOTIDE SEQUENCE [LARGE SCALE GENOMIC DNA]</scope>
    <source>
        <strain>ATCC 29096 / DSM 1053 / JCM 10044 / NBRC 100330 / Delta H</strain>
    </source>
</reference>
<dbReference type="EMBL" id="AE000666">
    <property type="protein sequence ID" value="AAB84535.1"/>
    <property type="molecule type" value="Genomic_DNA"/>
</dbReference>
<dbReference type="PIR" id="F69132">
    <property type="entry name" value="F69132"/>
</dbReference>
<dbReference type="RefSeq" id="WP_010875668.1">
    <property type="nucleotide sequence ID" value="NC_000916.1"/>
</dbReference>
<dbReference type="SMR" id="O26134"/>
<dbReference type="FunCoup" id="O26134">
    <property type="interactions" value="173"/>
</dbReference>
<dbReference type="STRING" id="187420.MTH_26"/>
<dbReference type="PaxDb" id="187420-MTH_26"/>
<dbReference type="EnsemblBacteria" id="AAB84535">
    <property type="protein sequence ID" value="AAB84535"/>
    <property type="gene ID" value="MTH_26"/>
</dbReference>
<dbReference type="GeneID" id="1469988"/>
<dbReference type="KEGG" id="mth:MTH_26"/>
<dbReference type="PATRIC" id="fig|187420.15.peg.26"/>
<dbReference type="HOGENOM" id="CLU_031763_3_0_2"/>
<dbReference type="InParanoid" id="O26134"/>
<dbReference type="Proteomes" id="UP000005223">
    <property type="component" value="Chromosome"/>
</dbReference>
<dbReference type="GO" id="GO:0005886">
    <property type="term" value="C:plasma membrane"/>
    <property type="evidence" value="ECO:0007669"/>
    <property type="project" value="UniProtKB-SubCell"/>
</dbReference>
<dbReference type="GO" id="GO:0065002">
    <property type="term" value="P:intracellular protein transmembrane transport"/>
    <property type="evidence" value="ECO:0007669"/>
    <property type="project" value="UniProtKB-UniRule"/>
</dbReference>
<dbReference type="GO" id="GO:0006605">
    <property type="term" value="P:protein targeting"/>
    <property type="evidence" value="ECO:0007669"/>
    <property type="project" value="UniProtKB-UniRule"/>
</dbReference>
<dbReference type="Gene3D" id="1.10.3370.10">
    <property type="entry name" value="SecY subunit domain"/>
    <property type="match status" value="1"/>
</dbReference>
<dbReference type="HAMAP" id="MF_01465">
    <property type="entry name" value="SecY"/>
    <property type="match status" value="1"/>
</dbReference>
<dbReference type="InterPro" id="IPR026593">
    <property type="entry name" value="SecY"/>
</dbReference>
<dbReference type="InterPro" id="IPR002208">
    <property type="entry name" value="SecY/SEC61-alpha"/>
</dbReference>
<dbReference type="InterPro" id="IPR030659">
    <property type="entry name" value="SecY_CS"/>
</dbReference>
<dbReference type="InterPro" id="IPR023201">
    <property type="entry name" value="SecY_dom_sf"/>
</dbReference>
<dbReference type="InterPro" id="IPR019561">
    <property type="entry name" value="Translocon_Sec61/SecY_plug_dom"/>
</dbReference>
<dbReference type="NCBIfam" id="TIGR00967">
    <property type="entry name" value="3a0501s007"/>
    <property type="match status" value="1"/>
</dbReference>
<dbReference type="NCBIfam" id="NF006341">
    <property type="entry name" value="PRK08568.1-5"/>
    <property type="match status" value="1"/>
</dbReference>
<dbReference type="PANTHER" id="PTHR10906">
    <property type="entry name" value="SECY/SEC61-ALPHA FAMILY MEMBER"/>
    <property type="match status" value="1"/>
</dbReference>
<dbReference type="Pfam" id="PF10559">
    <property type="entry name" value="Plug_translocon"/>
    <property type="match status" value="1"/>
</dbReference>
<dbReference type="Pfam" id="PF00344">
    <property type="entry name" value="SecY"/>
    <property type="match status" value="1"/>
</dbReference>
<dbReference type="PIRSF" id="PIRSF004557">
    <property type="entry name" value="SecY"/>
    <property type="match status" value="1"/>
</dbReference>
<dbReference type="PRINTS" id="PR00303">
    <property type="entry name" value="SECYTRNLCASE"/>
</dbReference>
<dbReference type="SUPFAM" id="SSF103491">
    <property type="entry name" value="Preprotein translocase SecY subunit"/>
    <property type="match status" value="1"/>
</dbReference>
<dbReference type="PROSITE" id="PS00755">
    <property type="entry name" value="SECY_1"/>
    <property type="match status" value="1"/>
</dbReference>
<dbReference type="PROSITE" id="PS00756">
    <property type="entry name" value="SECY_2"/>
    <property type="match status" value="1"/>
</dbReference>
<evidence type="ECO:0000250" key="1"/>
<evidence type="ECO:0000255" key="2">
    <source>
        <dbReference type="HAMAP-Rule" id="MF_01465"/>
    </source>
</evidence>
<organism>
    <name type="scientific">Methanothermobacter thermautotrophicus (strain ATCC 29096 / DSM 1053 / JCM 10044 / NBRC 100330 / Delta H)</name>
    <name type="common">Methanobacterium thermoautotrophicum</name>
    <dbReference type="NCBI Taxonomy" id="187420"/>
    <lineage>
        <taxon>Archaea</taxon>
        <taxon>Methanobacteriati</taxon>
        <taxon>Methanobacteriota</taxon>
        <taxon>Methanomada group</taxon>
        <taxon>Methanobacteria</taxon>
        <taxon>Methanobacteriales</taxon>
        <taxon>Methanobacteriaceae</taxon>
        <taxon>Methanothermobacter</taxon>
    </lineage>
</organism>
<sequence>MEQLKEKFEPLFSVLPQVKSPGYRVPFREKLKWTGIILVLYFFLAQIPLYGLSANAVDQFAQFRAVLAGNFGSILTLGIGPIVSASIILQLLVGGKILKLDLSRHEDKAFFQGLQKLLAIVFTFFEALIFVLTGSLAPSAPQFVWVLILQLTIGGILIIFLDEVVSKWGFGSGVGLFIAAGVSQEIIVGAFNPLSAPTQPGVPAGRITGFLYLLFTGQSPDFQYYVLPVLALIAVFLVVVYAESMRVEIPISMGGGKRLSRGAVGKYPLRFIYASNMPVILTSALLLNVQLLANVFQKLGYPILGTVSNGQAVDGLAYLLTAPRSIDALILDPFRVVFYAVVFIGLCVLFAWLWVEISNIGPRHVARQLYQMGMQIPGFRSSRGQFEKILKRYIPTITILGGAFVGLLAFVADLTGSLGGGTGVLLTVGIVYRLYEEIAQEQLMDMHPILRSFLGD</sequence>
<feature type="chain" id="PRO_0000131765" description="Protein translocase subunit SecY">
    <location>
        <begin position="1"/>
        <end position="456"/>
    </location>
</feature>
<feature type="topological domain" description="Cytoplasmic" evidence="1">
    <location>
        <begin position="1"/>
        <end position="21"/>
    </location>
</feature>
<feature type="transmembrane region" description="Helical; Name=Helix 1" evidence="2">
    <location>
        <begin position="22"/>
        <end position="48"/>
    </location>
</feature>
<feature type="topological domain" description="Extracellular" evidence="1">
    <location>
        <begin position="49"/>
        <end position="59"/>
    </location>
</feature>
<feature type="transmembrane region" description="Discontinuously helical; Name=Helix 2" evidence="1">
    <location>
        <begin position="60"/>
        <end position="88"/>
    </location>
</feature>
<feature type="intramembrane region" description="Helical; Name=Helix 2A" evidence="1">
    <location>
        <begin position="60"/>
        <end position="67"/>
    </location>
</feature>
<feature type="intramembrane region" evidence="1">
    <location>
        <begin position="68"/>
        <end position="79"/>
    </location>
</feature>
<feature type="intramembrane region" description="Helical; Name=Helix 2B" evidence="1">
    <location>
        <begin position="80"/>
        <end position="88"/>
    </location>
</feature>
<feature type="topological domain" description="Cytoplasmic" evidence="1">
    <location>
        <begin position="89"/>
        <end position="109"/>
    </location>
</feature>
<feature type="transmembrane region" description="Helical; Name=Helix 3" evidence="2">
    <location>
        <begin position="110"/>
        <end position="134"/>
    </location>
</feature>
<feature type="topological domain" description="Extracellular" evidence="1">
    <location>
        <begin position="135"/>
        <end position="141"/>
    </location>
</feature>
<feature type="transmembrane region" description="Helical; Name=Helix 4" evidence="2">
    <location>
        <begin position="142"/>
        <end position="166"/>
    </location>
</feature>
<feature type="topological domain" description="Cytoplasmic" evidence="1">
    <location>
        <begin position="167"/>
        <end position="172"/>
    </location>
</feature>
<feature type="transmembrane region" description="Helical; Name=Helix 5" evidence="2">
    <location>
        <begin position="173"/>
        <end position="191"/>
    </location>
</feature>
<feature type="topological domain" description="Extracellular" evidence="1">
    <location>
        <begin position="192"/>
        <end position="224"/>
    </location>
</feature>
<feature type="transmembrane region" description="Helical; Name=Helix 6" evidence="2">
    <location>
        <begin position="225"/>
        <end position="246"/>
    </location>
</feature>
<feature type="topological domain" description="Cytoplasmic" evidence="1">
    <location>
        <begin position="247"/>
        <end position="275"/>
    </location>
</feature>
<feature type="transmembrane region" description="Helical; Name=Helix 7" evidence="2">
    <location>
        <begin position="276"/>
        <end position="297"/>
    </location>
</feature>
<feature type="topological domain" description="Extracellular" evidence="1">
    <location>
        <begin position="298"/>
        <end position="334"/>
    </location>
</feature>
<feature type="transmembrane region" description="Helical; Name=Helix 8" evidence="2">
    <location>
        <begin position="335"/>
        <end position="354"/>
    </location>
</feature>
<feature type="topological domain" description="Cytoplasmic" evidence="1">
    <location>
        <begin position="355"/>
        <end position="397"/>
    </location>
</feature>
<feature type="transmembrane region" description="Helical; Name=Helix 9" evidence="2">
    <location>
        <begin position="398"/>
        <end position="416"/>
    </location>
</feature>
<feature type="topological domain" description="Extracellular" evidence="1">
    <location>
        <begin position="417"/>
        <end position="419"/>
    </location>
</feature>
<feature type="transmembrane region" description="Helical; Name=Helix 10" evidence="2">
    <location>
        <begin position="420"/>
        <end position="434"/>
    </location>
</feature>
<feature type="topological domain" description="Cytoplasmic" evidence="1">
    <location>
        <begin position="435"/>
        <end position="456"/>
    </location>
</feature>
<accession>O26134</accession>
<comment type="function">
    <text evidence="2">The central subunit of the protein translocation channel SecYEG. Consists of two halves formed by TMs 1-5 and 6-10. These two domains form a lateral gate at the front which open onto the bilayer between TMs 2 and 7, and are clamped together by SecE at the back. The channel is closed by both a pore ring composed of hydrophobic SecY resides and a short helix (helix 2A) on the extracellular side of the membrane which forms a plug. The plug probably moves laterally to allow the channel to open. The ring and the pore may move independently.</text>
</comment>
<comment type="subunit">
    <text evidence="2">Component of the Sec protein translocase complex. Heterotrimer consisting of alpha (SecY), beta (SecG) and gamma (SecE) subunits. The heterotrimers can form oligomers, although 1 heterotrimer is thought to be able to translocate proteins. Interacts with the ribosome. May interact with SecDF, and other proteins may be involved.</text>
</comment>
<comment type="subcellular location">
    <subcellularLocation>
        <location evidence="2">Cell membrane</location>
        <topology evidence="2">Multi-pass membrane protein</topology>
    </subcellularLocation>
</comment>
<comment type="similarity">
    <text evidence="2">Belongs to the SecY/SEC61-alpha family.</text>
</comment>
<protein>
    <recommendedName>
        <fullName evidence="2">Protein translocase subunit SecY</fullName>
    </recommendedName>
    <alternativeName>
        <fullName evidence="2">Protein transport protein SEC61 subunit alpha homolog</fullName>
    </alternativeName>
</protein>
<proteinExistence type="inferred from homology"/>
<name>SECY_METTH</name>